<name>S2B24_MOUSE</name>
<proteinExistence type="evidence at transcript level"/>
<dbReference type="EMBL" id="BK000194">
    <property type="protein sequence ID" value="DAA00351.1"/>
    <property type="molecule type" value="mRNA"/>
</dbReference>
<dbReference type="EMBL" id="AY370635">
    <property type="protein sequence ID" value="AAQ72535.1"/>
    <property type="molecule type" value="mRNA"/>
</dbReference>
<dbReference type="EMBL" id="BC115602">
    <property type="protein sequence ID" value="AAI15603.1"/>
    <property type="molecule type" value="mRNA"/>
</dbReference>
<dbReference type="EMBL" id="BC115603">
    <property type="protein sequence ID" value="AAI15604.1"/>
    <property type="molecule type" value="mRNA"/>
</dbReference>
<dbReference type="EMBL" id="BX537299">
    <property type="status" value="NOT_ANNOTATED_CDS"/>
    <property type="molecule type" value="Genomic_DNA"/>
</dbReference>
<dbReference type="CCDS" id="CCDS21132.1"/>
<dbReference type="RefSeq" id="NP_803229.1">
    <property type="nucleotide sequence ID" value="NM_177446.2"/>
</dbReference>
<dbReference type="SMR" id="Q7M747"/>
<dbReference type="STRING" id="10090.ENSMUSP00000052456"/>
<dbReference type="iPTMnet" id="Q7M747"/>
<dbReference type="PhosphoSitePlus" id="Q7M747"/>
<dbReference type="PaxDb" id="10090-ENSMUSP00000052456"/>
<dbReference type="ProteomicsDB" id="253380"/>
<dbReference type="DNASU" id="233090"/>
<dbReference type="Ensembl" id="ENSMUST00000055444.6">
    <property type="protein sequence ID" value="ENSMUSP00000052456.6"/>
    <property type="gene ID" value="ENSMUSG00000046438.6"/>
</dbReference>
<dbReference type="GeneID" id="233090"/>
<dbReference type="KEGG" id="mmu:233090"/>
<dbReference type="UCSC" id="uc009gim.1">
    <property type="organism name" value="mouse"/>
</dbReference>
<dbReference type="AGR" id="MGI:2655741"/>
<dbReference type="CTD" id="233090"/>
<dbReference type="MGI" id="MGI:2655741">
    <property type="gene designation" value="Scgb2b24"/>
</dbReference>
<dbReference type="VEuPathDB" id="HostDB:ENSMUSG00000046438"/>
<dbReference type="eggNOG" id="ENOG502RU0W">
    <property type="taxonomic scope" value="Eukaryota"/>
</dbReference>
<dbReference type="GeneTree" id="ENSGT00900000141269"/>
<dbReference type="HOGENOM" id="CLU_169363_0_0_1"/>
<dbReference type="InParanoid" id="Q7M747"/>
<dbReference type="OMA" id="IGRIQDC"/>
<dbReference type="OrthoDB" id="9591489at2759"/>
<dbReference type="PhylomeDB" id="Q7M747"/>
<dbReference type="TreeFam" id="TF339762"/>
<dbReference type="BioGRID-ORCS" id="233090">
    <property type="hits" value="1 hit in 78 CRISPR screens"/>
</dbReference>
<dbReference type="PRO" id="PR:Q7M747"/>
<dbReference type="Proteomes" id="UP000000589">
    <property type="component" value="Chromosome 7"/>
</dbReference>
<dbReference type="RNAct" id="Q7M747">
    <property type="molecule type" value="protein"/>
</dbReference>
<dbReference type="Bgee" id="ENSMUSG00000046438">
    <property type="expression patterns" value="Expressed in lip and 3 other cell types or tissues"/>
</dbReference>
<dbReference type="ExpressionAtlas" id="Q7M747">
    <property type="expression patterns" value="baseline and differential"/>
</dbReference>
<dbReference type="GO" id="GO:0005615">
    <property type="term" value="C:extracellular space"/>
    <property type="evidence" value="ECO:0007669"/>
    <property type="project" value="InterPro"/>
</dbReference>
<dbReference type="CDD" id="cd00633">
    <property type="entry name" value="Secretoglobin"/>
    <property type="match status" value="1"/>
</dbReference>
<dbReference type="Gene3D" id="1.20.920.50">
    <property type="match status" value="1"/>
</dbReference>
<dbReference type="InterPro" id="IPR015332">
    <property type="entry name" value="CH2-like"/>
</dbReference>
<dbReference type="InterPro" id="IPR016126">
    <property type="entry name" value="Secretoglobin"/>
</dbReference>
<dbReference type="InterPro" id="IPR053723">
    <property type="entry name" value="Secretoglobin_Domain_sf"/>
</dbReference>
<dbReference type="InterPro" id="IPR035960">
    <property type="entry name" value="Secretoglobin_sf"/>
</dbReference>
<dbReference type="PANTHER" id="PTHR31708:SF1">
    <property type="entry name" value="ABPBG11-RELATED"/>
    <property type="match status" value="1"/>
</dbReference>
<dbReference type="PANTHER" id="PTHR31708">
    <property type="entry name" value="ABPBG26-RELATED"/>
    <property type="match status" value="1"/>
</dbReference>
<dbReference type="Pfam" id="PF09252">
    <property type="entry name" value="Feld-I_B"/>
    <property type="match status" value="1"/>
</dbReference>
<dbReference type="SUPFAM" id="SSF48201">
    <property type="entry name" value="Uteroglobin-like"/>
    <property type="match status" value="1"/>
</dbReference>
<dbReference type="PROSITE" id="PS51311">
    <property type="entry name" value="SCGB"/>
    <property type="match status" value="1"/>
</dbReference>
<organism>
    <name type="scientific">Mus musculus</name>
    <name type="common">Mouse</name>
    <dbReference type="NCBI Taxonomy" id="10090"/>
    <lineage>
        <taxon>Eukaryota</taxon>
        <taxon>Metazoa</taxon>
        <taxon>Chordata</taxon>
        <taxon>Craniata</taxon>
        <taxon>Vertebrata</taxon>
        <taxon>Euteleostomi</taxon>
        <taxon>Mammalia</taxon>
        <taxon>Eutheria</taxon>
        <taxon>Euarchontoglires</taxon>
        <taxon>Glires</taxon>
        <taxon>Rodentia</taxon>
        <taxon>Myomorpha</taxon>
        <taxon>Muroidea</taxon>
        <taxon>Muridae</taxon>
        <taxon>Murinae</taxon>
        <taxon>Mus</taxon>
        <taxon>Mus</taxon>
    </lineage>
</organism>
<feature type="signal peptide" evidence="1">
    <location>
        <begin position="1"/>
        <end position="23"/>
    </location>
</feature>
<feature type="chain" id="PRO_0000342376" description="Secretoglobin family 2B member 24">
    <location>
        <begin position="24"/>
        <end position="112"/>
    </location>
</feature>
<accession>Q7M747</accession>
<protein>
    <recommendedName>
        <fullName>Secretoglobin family 2B member 24</fullName>
    </recommendedName>
    <alternativeName>
        <fullName>Allergen dI chain C2B</fullName>
    </alternativeName>
    <alternativeName>
        <fullName>Androgen-binding protein zeta</fullName>
    </alternativeName>
    <alternativeName>
        <fullName>Lacrimal androgen-binding protein zeta</fullName>
    </alternativeName>
</protein>
<evidence type="ECO:0000255" key="1"/>
<evidence type="ECO:0000269" key="2">
    <source>
    </source>
</evidence>
<evidence type="ECO:0000305" key="3"/>
<keyword id="KW-0020">Allergen</keyword>
<keyword id="KW-1185">Reference proteome</keyword>
<keyword id="KW-0964">Secreted</keyword>
<keyword id="KW-0732">Signal</keyword>
<sequence>MKGTLLLLALLMIGELGFHTTEACVPFFAGYAGVISGSRLWLYHELSAFNGTPKETVAYEKIQDCYKEQGVKSQTLEPQILASILVTPECLQYYSEETFTKIKDALKKISQH</sequence>
<reference key="1">
    <citation type="journal article" date="2002" name="Am. J. Respir. Crit. Care Med.">
        <title>Secretoglobins SCGB3A1 and SCGB3A2 define secretory cell subsets in mouse and human airways.</title>
        <authorList>
            <person name="Reynolds S.D."/>
            <person name="Reynolds P.R."/>
            <person name="Pryhuber G.S."/>
            <person name="Finder J.D."/>
            <person name="Stripp B.R."/>
        </authorList>
    </citation>
    <scope>NUCLEOTIDE SEQUENCE [MRNA]</scope>
</reference>
<reference key="2">
    <citation type="journal article" date="2005" name="Invest. Ophthalmol. Vis. Sci.">
        <title>Secretoglobins: sexually dimorphic expression of androgen-binding protein mRNA in mouse lacrimal glands.</title>
        <authorList>
            <person name="Remington S.G."/>
            <person name="Nelson J.D."/>
        </authorList>
    </citation>
    <scope>NUCLEOTIDE SEQUENCE [MRNA]</scope>
    <scope>TISSUE SPECIFICITY</scope>
    <source>
        <strain>Swiss Webster</strain>
        <tissue>Lacrimal gland</tissue>
    </source>
</reference>
<reference key="3">
    <citation type="journal article" date="2009" name="PLoS Biol.">
        <title>Lineage-specific biology revealed by a finished genome assembly of the mouse.</title>
        <authorList>
            <person name="Church D.M."/>
            <person name="Goodstadt L."/>
            <person name="Hillier L.W."/>
            <person name="Zody M.C."/>
            <person name="Goldstein S."/>
            <person name="She X."/>
            <person name="Bult C.J."/>
            <person name="Agarwala R."/>
            <person name="Cherry J.L."/>
            <person name="DiCuccio M."/>
            <person name="Hlavina W."/>
            <person name="Kapustin Y."/>
            <person name="Meric P."/>
            <person name="Maglott D."/>
            <person name="Birtle Z."/>
            <person name="Marques A.C."/>
            <person name="Graves T."/>
            <person name="Zhou S."/>
            <person name="Teague B."/>
            <person name="Potamousis K."/>
            <person name="Churas C."/>
            <person name="Place M."/>
            <person name="Herschleb J."/>
            <person name="Runnheim R."/>
            <person name="Forrest D."/>
            <person name="Amos-Landgraf J."/>
            <person name="Schwartz D.C."/>
            <person name="Cheng Z."/>
            <person name="Lindblad-Toh K."/>
            <person name="Eichler E.E."/>
            <person name="Ponting C.P."/>
        </authorList>
    </citation>
    <scope>NUCLEOTIDE SEQUENCE [LARGE SCALE GENOMIC DNA]</scope>
    <source>
        <strain>C57BL/6J</strain>
    </source>
</reference>
<reference key="4">
    <citation type="journal article" date="2004" name="Genome Res.">
        <title>The status, quality, and expansion of the NIH full-length cDNA project: the Mammalian Gene Collection (MGC).</title>
        <authorList>
            <consortium name="The MGC Project Team"/>
        </authorList>
    </citation>
    <scope>NUCLEOTIDE SEQUENCE [LARGE SCALE MRNA]</scope>
</reference>
<comment type="subcellular location">
    <subcellularLocation>
        <location evidence="3">Secreted</location>
    </subcellularLocation>
</comment>
<comment type="tissue specificity">
    <text evidence="2">Expressed in lacrimal gland, at higher level in males than females.</text>
</comment>
<comment type="similarity">
    <text evidence="3">Belongs to the secretoglobin family.</text>
</comment>
<gene>
    <name type="primary">Scgb2b24</name>
    <name type="synonym">Abpz</name>
</gene>